<comment type="similarity">
    <text evidence="1">Belongs to the universal ribosomal protein uS15 family.</text>
</comment>
<sequence>MGRLHSKGKGISSSALPYRRTAPSWLKISSQDVDETICKFAKKGLTPSQIGVILRDSHGIAQVKSVTGSKILRILKAHGLAPEIPEDLYHLIKKAVSIRKHLERFRKDKDSKFRLILVESRIHRLARYYKKTKKLPPVWKYESTTASTLVA</sequence>
<reference key="1">
    <citation type="submission" date="1993-08" db="EMBL/GenBank/DDBJ databases">
        <authorList>
            <person name="Bertsch U."/>
            <person name="Clausen-Krueper S."/>
            <person name="Soll J."/>
        </authorList>
    </citation>
    <scope>NUCLEOTIDE SEQUENCE [MRNA]</scope>
    <source>
        <tissue>Leaf</tissue>
    </source>
</reference>
<feature type="chain" id="PRO_0000115683" description="Small ribosomal subunit protein uS15">
    <location>
        <begin position="1"/>
        <end position="151"/>
    </location>
</feature>
<keyword id="KW-0687">Ribonucleoprotein</keyword>
<keyword id="KW-0689">Ribosomal protein</keyword>
<organism>
    <name type="scientific">Pisum sativum</name>
    <name type="common">Garden pea</name>
    <name type="synonym">Lathyrus oleraceus</name>
    <dbReference type="NCBI Taxonomy" id="3888"/>
    <lineage>
        <taxon>Eukaryota</taxon>
        <taxon>Viridiplantae</taxon>
        <taxon>Streptophyta</taxon>
        <taxon>Embryophyta</taxon>
        <taxon>Tracheophyta</taxon>
        <taxon>Spermatophyta</taxon>
        <taxon>Magnoliopsida</taxon>
        <taxon>eudicotyledons</taxon>
        <taxon>Gunneridae</taxon>
        <taxon>Pentapetalae</taxon>
        <taxon>rosids</taxon>
        <taxon>fabids</taxon>
        <taxon>Fabales</taxon>
        <taxon>Fabaceae</taxon>
        <taxon>Papilionoideae</taxon>
        <taxon>50 kb inversion clade</taxon>
        <taxon>NPAAA clade</taxon>
        <taxon>Hologalegina</taxon>
        <taxon>IRL clade</taxon>
        <taxon>Fabeae</taxon>
        <taxon>Pisum</taxon>
    </lineage>
</organism>
<gene>
    <name type="primary">RPS13</name>
</gene>
<evidence type="ECO:0000305" key="1"/>
<protein>
    <recommendedName>
        <fullName evidence="1">Small ribosomal subunit protein uS15</fullName>
    </recommendedName>
    <alternativeName>
        <fullName>40S ribosomal protein S13</fullName>
    </alternativeName>
</protein>
<name>RS13_PEA</name>
<proteinExistence type="evidence at transcript level"/>
<accession>P46298</accession>
<dbReference type="EMBL" id="Z25509">
    <property type="protein sequence ID" value="CAA80974.1"/>
    <property type="molecule type" value="mRNA"/>
</dbReference>
<dbReference type="PIR" id="S36423">
    <property type="entry name" value="S36423"/>
</dbReference>
<dbReference type="SMR" id="P46298"/>
<dbReference type="GO" id="GO:0022627">
    <property type="term" value="C:cytosolic small ribosomal subunit"/>
    <property type="evidence" value="ECO:0007669"/>
    <property type="project" value="TreeGrafter"/>
</dbReference>
<dbReference type="GO" id="GO:0005730">
    <property type="term" value="C:nucleolus"/>
    <property type="evidence" value="ECO:0007669"/>
    <property type="project" value="TreeGrafter"/>
</dbReference>
<dbReference type="GO" id="GO:0070181">
    <property type="term" value="F:small ribosomal subunit rRNA binding"/>
    <property type="evidence" value="ECO:0007669"/>
    <property type="project" value="TreeGrafter"/>
</dbReference>
<dbReference type="GO" id="GO:0003735">
    <property type="term" value="F:structural constituent of ribosome"/>
    <property type="evidence" value="ECO:0007669"/>
    <property type="project" value="InterPro"/>
</dbReference>
<dbReference type="GO" id="GO:0006412">
    <property type="term" value="P:translation"/>
    <property type="evidence" value="ECO:0007669"/>
    <property type="project" value="InterPro"/>
</dbReference>
<dbReference type="CDD" id="cd00353">
    <property type="entry name" value="Ribosomal_S15p_S13e"/>
    <property type="match status" value="1"/>
</dbReference>
<dbReference type="FunFam" id="1.10.287.10:FF:000003">
    <property type="entry name" value="40S ribosomal protein S13"/>
    <property type="match status" value="1"/>
</dbReference>
<dbReference type="FunFam" id="4.10.860.130:FF:000001">
    <property type="entry name" value="40S ribosomal protein S13"/>
    <property type="match status" value="1"/>
</dbReference>
<dbReference type="Gene3D" id="4.10.860.130">
    <property type="match status" value="1"/>
</dbReference>
<dbReference type="Gene3D" id="1.10.287.10">
    <property type="entry name" value="S15/NS1, RNA-binding"/>
    <property type="match status" value="1"/>
</dbReference>
<dbReference type="HAMAP" id="MF_01343_A">
    <property type="entry name" value="Ribosomal_uS15_A"/>
    <property type="match status" value="1"/>
</dbReference>
<dbReference type="InterPro" id="IPR000589">
    <property type="entry name" value="Ribosomal_uS15"/>
</dbReference>
<dbReference type="InterPro" id="IPR023029">
    <property type="entry name" value="Ribosomal_uS15_arc_euk"/>
</dbReference>
<dbReference type="InterPro" id="IPR012606">
    <property type="entry name" value="Ribosomal_uS15_N"/>
</dbReference>
<dbReference type="InterPro" id="IPR009068">
    <property type="entry name" value="uS15_NS1_RNA-bd_sf"/>
</dbReference>
<dbReference type="NCBIfam" id="NF006331">
    <property type="entry name" value="PRK08561.1"/>
    <property type="match status" value="1"/>
</dbReference>
<dbReference type="PANTHER" id="PTHR11885">
    <property type="entry name" value="RIBOSOMAL PROTEIN S15P/S13E"/>
    <property type="match status" value="1"/>
</dbReference>
<dbReference type="PANTHER" id="PTHR11885:SF25">
    <property type="entry name" value="SMALL RIBOSOMAL SUBUNIT PROTEIN US15Y-RELATED"/>
    <property type="match status" value="1"/>
</dbReference>
<dbReference type="Pfam" id="PF08069">
    <property type="entry name" value="Ribosomal_S13_N"/>
    <property type="match status" value="1"/>
</dbReference>
<dbReference type="Pfam" id="PF00312">
    <property type="entry name" value="Ribosomal_S15"/>
    <property type="match status" value="1"/>
</dbReference>
<dbReference type="SMART" id="SM01386">
    <property type="entry name" value="Ribosomal_S13_N"/>
    <property type="match status" value="1"/>
</dbReference>
<dbReference type="SMART" id="SM01387">
    <property type="entry name" value="Ribosomal_S15"/>
    <property type="match status" value="1"/>
</dbReference>
<dbReference type="SUPFAM" id="SSF47060">
    <property type="entry name" value="S15/NS1 RNA-binding domain"/>
    <property type="match status" value="1"/>
</dbReference>
<dbReference type="PROSITE" id="PS00362">
    <property type="entry name" value="RIBOSOMAL_S15"/>
    <property type="match status" value="1"/>
</dbReference>